<proteinExistence type="inferred from homology"/>
<name>RS7_BACAH</name>
<dbReference type="EMBL" id="CP000485">
    <property type="protein sequence ID" value="ABK83519.1"/>
    <property type="molecule type" value="Genomic_DNA"/>
</dbReference>
<dbReference type="RefSeq" id="WP_001137493.1">
    <property type="nucleotide sequence ID" value="NC_008600.1"/>
</dbReference>
<dbReference type="SMR" id="A0R8H6"/>
<dbReference type="GeneID" id="93010947"/>
<dbReference type="KEGG" id="btl:BALH_0104"/>
<dbReference type="HOGENOM" id="CLU_072226_1_1_9"/>
<dbReference type="GO" id="GO:0015935">
    <property type="term" value="C:small ribosomal subunit"/>
    <property type="evidence" value="ECO:0007669"/>
    <property type="project" value="InterPro"/>
</dbReference>
<dbReference type="GO" id="GO:0019843">
    <property type="term" value="F:rRNA binding"/>
    <property type="evidence" value="ECO:0007669"/>
    <property type="project" value="UniProtKB-UniRule"/>
</dbReference>
<dbReference type="GO" id="GO:0003735">
    <property type="term" value="F:structural constituent of ribosome"/>
    <property type="evidence" value="ECO:0007669"/>
    <property type="project" value="InterPro"/>
</dbReference>
<dbReference type="GO" id="GO:0000049">
    <property type="term" value="F:tRNA binding"/>
    <property type="evidence" value="ECO:0007669"/>
    <property type="project" value="UniProtKB-UniRule"/>
</dbReference>
<dbReference type="GO" id="GO:0006412">
    <property type="term" value="P:translation"/>
    <property type="evidence" value="ECO:0007669"/>
    <property type="project" value="UniProtKB-UniRule"/>
</dbReference>
<dbReference type="CDD" id="cd14869">
    <property type="entry name" value="uS7_Bacteria"/>
    <property type="match status" value="1"/>
</dbReference>
<dbReference type="FunFam" id="1.10.455.10:FF:000001">
    <property type="entry name" value="30S ribosomal protein S7"/>
    <property type="match status" value="1"/>
</dbReference>
<dbReference type="Gene3D" id="1.10.455.10">
    <property type="entry name" value="Ribosomal protein S7 domain"/>
    <property type="match status" value="1"/>
</dbReference>
<dbReference type="HAMAP" id="MF_00480_B">
    <property type="entry name" value="Ribosomal_uS7_B"/>
    <property type="match status" value="1"/>
</dbReference>
<dbReference type="InterPro" id="IPR000235">
    <property type="entry name" value="Ribosomal_uS7"/>
</dbReference>
<dbReference type="InterPro" id="IPR005717">
    <property type="entry name" value="Ribosomal_uS7_bac/org-type"/>
</dbReference>
<dbReference type="InterPro" id="IPR020606">
    <property type="entry name" value="Ribosomal_uS7_CS"/>
</dbReference>
<dbReference type="InterPro" id="IPR023798">
    <property type="entry name" value="Ribosomal_uS7_dom"/>
</dbReference>
<dbReference type="InterPro" id="IPR036823">
    <property type="entry name" value="Ribosomal_uS7_dom_sf"/>
</dbReference>
<dbReference type="NCBIfam" id="TIGR01029">
    <property type="entry name" value="rpsG_bact"/>
    <property type="match status" value="1"/>
</dbReference>
<dbReference type="PANTHER" id="PTHR11205">
    <property type="entry name" value="RIBOSOMAL PROTEIN S7"/>
    <property type="match status" value="1"/>
</dbReference>
<dbReference type="Pfam" id="PF00177">
    <property type="entry name" value="Ribosomal_S7"/>
    <property type="match status" value="1"/>
</dbReference>
<dbReference type="PIRSF" id="PIRSF002122">
    <property type="entry name" value="RPS7p_RPS7a_RPS5e_RPS7o"/>
    <property type="match status" value="1"/>
</dbReference>
<dbReference type="SUPFAM" id="SSF47973">
    <property type="entry name" value="Ribosomal protein S7"/>
    <property type="match status" value="1"/>
</dbReference>
<dbReference type="PROSITE" id="PS00052">
    <property type="entry name" value="RIBOSOMAL_S7"/>
    <property type="match status" value="1"/>
</dbReference>
<feature type="chain" id="PRO_1000014147" description="Small ribosomal subunit protein uS7">
    <location>
        <begin position="1"/>
        <end position="156"/>
    </location>
</feature>
<evidence type="ECO:0000255" key="1">
    <source>
        <dbReference type="HAMAP-Rule" id="MF_00480"/>
    </source>
</evidence>
<evidence type="ECO:0000305" key="2"/>
<reference key="1">
    <citation type="journal article" date="2007" name="J. Bacteriol.">
        <title>The complete genome sequence of Bacillus thuringiensis Al Hakam.</title>
        <authorList>
            <person name="Challacombe J.F."/>
            <person name="Altherr M.R."/>
            <person name="Xie G."/>
            <person name="Bhotika S.S."/>
            <person name="Brown N."/>
            <person name="Bruce D."/>
            <person name="Campbell C.S."/>
            <person name="Campbell M.L."/>
            <person name="Chen J."/>
            <person name="Chertkov O."/>
            <person name="Cleland C."/>
            <person name="Dimitrijevic M."/>
            <person name="Doggett N.A."/>
            <person name="Fawcett J.J."/>
            <person name="Glavina T."/>
            <person name="Goodwin L.A."/>
            <person name="Green L.D."/>
            <person name="Han C.S."/>
            <person name="Hill K.K."/>
            <person name="Hitchcock P."/>
            <person name="Jackson P.J."/>
            <person name="Keim P."/>
            <person name="Kewalramani A.R."/>
            <person name="Longmire J."/>
            <person name="Lucas S."/>
            <person name="Malfatti S."/>
            <person name="Martinez D."/>
            <person name="McMurry K."/>
            <person name="Meincke L.J."/>
            <person name="Misra M."/>
            <person name="Moseman B.L."/>
            <person name="Mundt M."/>
            <person name="Munk A.C."/>
            <person name="Okinaka R.T."/>
            <person name="Parson-Quintana B."/>
            <person name="Reilly L.P."/>
            <person name="Richardson P."/>
            <person name="Robinson D.L."/>
            <person name="Saunders E."/>
            <person name="Tapia R."/>
            <person name="Tesmer J.G."/>
            <person name="Thayer N."/>
            <person name="Thompson L.S."/>
            <person name="Tice H."/>
            <person name="Ticknor L.O."/>
            <person name="Wills P.L."/>
            <person name="Gilna P."/>
            <person name="Brettin T.S."/>
        </authorList>
    </citation>
    <scope>NUCLEOTIDE SEQUENCE [LARGE SCALE GENOMIC DNA]</scope>
    <source>
        <strain>Al Hakam</strain>
    </source>
</reference>
<gene>
    <name evidence="1" type="primary">rpsG</name>
    <name type="ordered locus">BALH_0104</name>
</gene>
<accession>A0R8H6</accession>
<sequence length="156" mass="17884">MPRKGPVAKRDVLPDPMYNSKLVTRLINKMMVDGKKGKSQTILYNAFDIVSERTGKEPMEVFEQALKNIMPVLEVRARRVGGANYQVPVEVRPERRTTLGLRWLVNYARLRGEKTMEERLANEILDAANNAGASVKKREDTHKMAEANKAFAHYRW</sequence>
<organism>
    <name type="scientific">Bacillus thuringiensis (strain Al Hakam)</name>
    <dbReference type="NCBI Taxonomy" id="412694"/>
    <lineage>
        <taxon>Bacteria</taxon>
        <taxon>Bacillati</taxon>
        <taxon>Bacillota</taxon>
        <taxon>Bacilli</taxon>
        <taxon>Bacillales</taxon>
        <taxon>Bacillaceae</taxon>
        <taxon>Bacillus</taxon>
        <taxon>Bacillus cereus group</taxon>
    </lineage>
</organism>
<comment type="function">
    <text evidence="1">One of the primary rRNA binding proteins, it binds directly to 16S rRNA where it nucleates assembly of the head domain of the 30S subunit. Is located at the subunit interface close to the decoding center, probably blocks exit of the E-site tRNA.</text>
</comment>
<comment type="subunit">
    <text evidence="1">Part of the 30S ribosomal subunit. Contacts proteins S9 and S11.</text>
</comment>
<comment type="similarity">
    <text evidence="1">Belongs to the universal ribosomal protein uS7 family.</text>
</comment>
<keyword id="KW-0687">Ribonucleoprotein</keyword>
<keyword id="KW-0689">Ribosomal protein</keyword>
<keyword id="KW-0694">RNA-binding</keyword>
<keyword id="KW-0699">rRNA-binding</keyword>
<keyword id="KW-0820">tRNA-binding</keyword>
<protein>
    <recommendedName>
        <fullName evidence="1">Small ribosomal subunit protein uS7</fullName>
    </recommendedName>
    <alternativeName>
        <fullName evidence="2">30S ribosomal protein S7</fullName>
    </alternativeName>
</protein>